<evidence type="ECO:0000250" key="1"/>
<evidence type="ECO:0000305" key="2"/>
<reference key="1">
    <citation type="online journal article" date="1999" name="Plant Gene Register">
        <title>Cloning and sequence analysis of cDNAs encoding lipid-transfer proteins from Oryza sativa L.</title>
        <authorList>
            <person name="Lee M.C."/>
            <person name="Kim Y.H."/>
            <person name="Yun D.W."/>
            <person name="Ma B.C."/>
            <person name="Nahm B.H."/>
            <person name="Eun M.Y."/>
        </authorList>
        <locator>PGR99-061</locator>
    </citation>
    <scope>NUCLEOTIDE SEQUENCE [MRNA]</scope>
    <source>
        <strain>cv. Milyang 23</strain>
    </source>
</reference>
<reference key="2">
    <citation type="journal article" date="2005" name="PLoS Biol.">
        <title>The genomes of Oryza sativa: a history of duplications.</title>
        <authorList>
            <person name="Yu J."/>
            <person name="Wang J."/>
            <person name="Lin W."/>
            <person name="Li S."/>
            <person name="Li H."/>
            <person name="Zhou J."/>
            <person name="Ni P."/>
            <person name="Dong W."/>
            <person name="Hu S."/>
            <person name="Zeng C."/>
            <person name="Zhang J."/>
            <person name="Zhang Y."/>
            <person name="Li R."/>
            <person name="Xu Z."/>
            <person name="Li S."/>
            <person name="Li X."/>
            <person name="Zheng H."/>
            <person name="Cong L."/>
            <person name="Lin L."/>
            <person name="Yin J."/>
            <person name="Geng J."/>
            <person name="Li G."/>
            <person name="Shi J."/>
            <person name="Liu J."/>
            <person name="Lv H."/>
            <person name="Li J."/>
            <person name="Wang J."/>
            <person name="Deng Y."/>
            <person name="Ran L."/>
            <person name="Shi X."/>
            <person name="Wang X."/>
            <person name="Wu Q."/>
            <person name="Li C."/>
            <person name="Ren X."/>
            <person name="Wang J."/>
            <person name="Wang X."/>
            <person name="Li D."/>
            <person name="Liu D."/>
            <person name="Zhang X."/>
            <person name="Ji Z."/>
            <person name="Zhao W."/>
            <person name="Sun Y."/>
            <person name="Zhang Z."/>
            <person name="Bao J."/>
            <person name="Han Y."/>
            <person name="Dong L."/>
            <person name="Ji J."/>
            <person name="Chen P."/>
            <person name="Wu S."/>
            <person name="Liu J."/>
            <person name="Xiao Y."/>
            <person name="Bu D."/>
            <person name="Tan J."/>
            <person name="Yang L."/>
            <person name="Ye C."/>
            <person name="Zhang J."/>
            <person name="Xu J."/>
            <person name="Zhou Y."/>
            <person name="Yu Y."/>
            <person name="Zhang B."/>
            <person name="Zhuang S."/>
            <person name="Wei H."/>
            <person name="Liu B."/>
            <person name="Lei M."/>
            <person name="Yu H."/>
            <person name="Li Y."/>
            <person name="Xu H."/>
            <person name="Wei S."/>
            <person name="He X."/>
            <person name="Fang L."/>
            <person name="Zhang Z."/>
            <person name="Zhang Y."/>
            <person name="Huang X."/>
            <person name="Su Z."/>
            <person name="Tong W."/>
            <person name="Li J."/>
            <person name="Tong Z."/>
            <person name="Li S."/>
            <person name="Ye J."/>
            <person name="Wang L."/>
            <person name="Fang L."/>
            <person name="Lei T."/>
            <person name="Chen C.-S."/>
            <person name="Chen H.-C."/>
            <person name="Xu Z."/>
            <person name="Li H."/>
            <person name="Huang H."/>
            <person name="Zhang F."/>
            <person name="Xu H."/>
            <person name="Li N."/>
            <person name="Zhao C."/>
            <person name="Li S."/>
            <person name="Dong L."/>
            <person name="Huang Y."/>
            <person name="Li L."/>
            <person name="Xi Y."/>
            <person name="Qi Q."/>
            <person name="Li W."/>
            <person name="Zhang B."/>
            <person name="Hu W."/>
            <person name="Zhang Y."/>
            <person name="Tian X."/>
            <person name="Jiao Y."/>
            <person name="Liang X."/>
            <person name="Jin J."/>
            <person name="Gao L."/>
            <person name="Zheng W."/>
            <person name="Hao B."/>
            <person name="Liu S.-M."/>
            <person name="Wang W."/>
            <person name="Yuan L."/>
            <person name="Cao M."/>
            <person name="McDermott J."/>
            <person name="Samudrala R."/>
            <person name="Wang J."/>
            <person name="Wong G.K.-S."/>
            <person name="Yang H."/>
        </authorList>
    </citation>
    <scope>NUCLEOTIDE SEQUENCE [LARGE SCALE GENOMIC DNA]</scope>
    <source>
        <strain>cv. 93-11</strain>
    </source>
</reference>
<proteinExistence type="evidence at transcript level"/>
<gene>
    <name type="primary">LTP</name>
    <name type="ORF">OsI_035994</name>
</gene>
<accession>A2ZHF1</accession>
<accession>O22484</accession>
<accession>P23096</accession>
<accession>P93434</accession>
<accession>Q2QYL1</accession>
<keyword id="KW-1015">Disulfide bond</keyword>
<keyword id="KW-0446">Lipid-binding</keyword>
<keyword id="KW-1185">Reference proteome</keyword>
<keyword id="KW-0732">Signal</keyword>
<keyword id="KW-0813">Transport</keyword>
<sequence>MARAQLVLVALVAALLLAAPHAAVAITCGQVNSAVGPCLTYARGGAGPSAACCSGVRSLKAAASTTADRRTACNCLKNAARGIKGLNAGNAASIPSKCGVSVPYTISASIDCSRVS</sequence>
<organism>
    <name type="scientific">Oryza sativa subsp. indica</name>
    <name type="common">Rice</name>
    <dbReference type="NCBI Taxonomy" id="39946"/>
    <lineage>
        <taxon>Eukaryota</taxon>
        <taxon>Viridiplantae</taxon>
        <taxon>Streptophyta</taxon>
        <taxon>Embryophyta</taxon>
        <taxon>Tracheophyta</taxon>
        <taxon>Spermatophyta</taxon>
        <taxon>Magnoliopsida</taxon>
        <taxon>Liliopsida</taxon>
        <taxon>Poales</taxon>
        <taxon>Poaceae</taxon>
        <taxon>BOP clade</taxon>
        <taxon>Oryzoideae</taxon>
        <taxon>Oryzeae</taxon>
        <taxon>Oryzinae</taxon>
        <taxon>Oryza</taxon>
        <taxon>Oryza sativa</taxon>
    </lineage>
</organism>
<protein>
    <recommendedName>
        <fullName>Non-specific lipid-transfer protein 1</fullName>
        <shortName>LTP 1</shortName>
        <shortName>PAPI</shortName>
    </recommendedName>
</protein>
<feature type="signal peptide" evidence="1">
    <location>
        <begin position="1"/>
        <end position="25"/>
    </location>
</feature>
<feature type="chain" id="PRO_0000296251" description="Non-specific lipid-transfer protein 1">
    <location>
        <begin position="26"/>
        <end position="116"/>
    </location>
</feature>
<feature type="disulfide bond" evidence="1">
    <location>
        <begin position="28"/>
        <end position="75"/>
    </location>
</feature>
<feature type="disulfide bond" evidence="1">
    <location>
        <begin position="38"/>
        <end position="52"/>
    </location>
</feature>
<feature type="disulfide bond" evidence="1">
    <location>
        <begin position="53"/>
        <end position="98"/>
    </location>
</feature>
<feature type="disulfide bond" evidence="1">
    <location>
        <begin position="73"/>
        <end position="112"/>
    </location>
</feature>
<feature type="sequence conflict" description="In Ref. 1; AAB70540." evidence="2" ref="1">
    <original>S</original>
    <variation>N</variation>
    <location>
        <position position="54"/>
    </location>
</feature>
<feature type="sequence conflict" description="In Ref. 1; AAB18815/CAA69949." evidence="2" ref="1">
    <original>K</original>
    <variation>F</variation>
    <location>
        <position position="60"/>
    </location>
</feature>
<comment type="function">
    <text>Plant non-specific lipid-transfer proteins transfer phospholipids as well as galactolipids across membranes. May play a role in wax or cutin deposition in the cell walls of expanding epidermal cells and certain secretory tissues.</text>
</comment>
<comment type="tissue specificity">
    <text>Aleurone (external part) of the seeds.</text>
</comment>
<comment type="similarity">
    <text evidence="2">Belongs to the plant LTP family.</text>
</comment>
<comment type="caution">
    <text evidence="2">Was originally thought to be an inhibitor of alpha-amylase or of a protease and was known as PAPI: probable alpha-amylase/protease inhibitor.</text>
</comment>
<comment type="sequence caution" evidence="2">
    <conflict type="frameshift">
        <sequence resource="EMBL-CDS" id="AAB70540"/>
    </conflict>
</comment>
<name>NLTP1_ORYSI</name>
<dbReference type="EMBL" id="U77295">
    <property type="protein sequence ID" value="AAB18815.1"/>
    <property type="molecule type" value="mRNA"/>
</dbReference>
<dbReference type="EMBL" id="Y08691">
    <property type="protein sequence ID" value="CAA69949.1"/>
    <property type="molecule type" value="mRNA"/>
</dbReference>
<dbReference type="EMBL" id="AF017360">
    <property type="protein sequence ID" value="AAB70540.1"/>
    <property type="status" value="ALT_FRAME"/>
    <property type="molecule type" value="mRNA"/>
</dbReference>
<dbReference type="EMBL" id="CM000137">
    <property type="protein sequence ID" value="EAY82035.1"/>
    <property type="molecule type" value="Genomic_DNA"/>
</dbReference>
<dbReference type="PIR" id="T02043">
    <property type="entry name" value="T02043"/>
</dbReference>
<dbReference type="PIR" id="T03781">
    <property type="entry name" value="T03781"/>
</dbReference>
<dbReference type="SMR" id="A2ZHF1"/>
<dbReference type="STRING" id="39946.A2ZHF1"/>
<dbReference type="Allergome" id="2788">
    <property type="allergen name" value="Ory s 14"/>
</dbReference>
<dbReference type="EnsemblPlants" id="BGIOSGA036882-TA">
    <property type="protein sequence ID" value="BGIOSGA036882-PA"/>
    <property type="gene ID" value="BGIOSGA036882"/>
</dbReference>
<dbReference type="EnsemblPlants" id="OsLaMu_12g0001090.01">
    <property type="protein sequence ID" value="OsLaMu_12g0001090.01"/>
    <property type="gene ID" value="OsLaMu_12g0001090"/>
</dbReference>
<dbReference type="Gramene" id="BGIOSGA036882-TA">
    <property type="protein sequence ID" value="BGIOSGA036882-PA"/>
    <property type="gene ID" value="BGIOSGA036882"/>
</dbReference>
<dbReference type="Gramene" id="OsLaMu_12g0001090.01">
    <property type="protein sequence ID" value="OsLaMu_12g0001090.01"/>
    <property type="gene ID" value="OsLaMu_12g0001090"/>
</dbReference>
<dbReference type="HOGENOM" id="CLU_128423_0_0_1"/>
<dbReference type="OMA" id="ISPCLAY"/>
<dbReference type="Proteomes" id="UP000007015">
    <property type="component" value="Chromosome 12"/>
</dbReference>
<dbReference type="GO" id="GO:0008289">
    <property type="term" value="F:lipid binding"/>
    <property type="evidence" value="ECO:0007669"/>
    <property type="project" value="UniProtKB-KW"/>
</dbReference>
<dbReference type="GO" id="GO:0006869">
    <property type="term" value="P:lipid transport"/>
    <property type="evidence" value="ECO:0007669"/>
    <property type="project" value="InterPro"/>
</dbReference>
<dbReference type="CDD" id="cd01960">
    <property type="entry name" value="nsLTP1"/>
    <property type="match status" value="1"/>
</dbReference>
<dbReference type="Gene3D" id="1.10.110.10">
    <property type="entry name" value="Plant lipid-transfer and hydrophobic proteins"/>
    <property type="match status" value="1"/>
</dbReference>
<dbReference type="InterPro" id="IPR036312">
    <property type="entry name" value="Bifun_inhib/LTP/seed_sf"/>
</dbReference>
<dbReference type="InterPro" id="IPR016140">
    <property type="entry name" value="Bifunc_inhib/LTP/seed_store"/>
</dbReference>
<dbReference type="InterPro" id="IPR000528">
    <property type="entry name" value="Plant_nsLTP"/>
</dbReference>
<dbReference type="PANTHER" id="PTHR33076">
    <property type="entry name" value="NON-SPECIFIC LIPID-TRANSFER PROTEIN 2-RELATED"/>
    <property type="match status" value="1"/>
</dbReference>
<dbReference type="Pfam" id="PF00234">
    <property type="entry name" value="Tryp_alpha_amyl"/>
    <property type="match status" value="1"/>
</dbReference>
<dbReference type="PRINTS" id="PR00382">
    <property type="entry name" value="LIPIDTRNSFER"/>
</dbReference>
<dbReference type="SMART" id="SM00499">
    <property type="entry name" value="AAI"/>
    <property type="match status" value="1"/>
</dbReference>
<dbReference type="SUPFAM" id="SSF47699">
    <property type="entry name" value="Bifunctional inhibitor/lipid-transfer protein/seed storage 2S albumin"/>
    <property type="match status" value="1"/>
</dbReference>
<dbReference type="PROSITE" id="PS00597">
    <property type="entry name" value="PLANT_LTP"/>
    <property type="match status" value="1"/>
</dbReference>